<name>ARP4_MYCMD</name>
<protein>
    <recommendedName>
        <fullName>Actin-related protein 4</fullName>
    </recommendedName>
    <alternativeName>
        <fullName>Actin-like protein ARP4</fullName>
        <shortName>Actin-like protein 4</shortName>
    </alternativeName>
</protein>
<keyword id="KW-0010">Activator</keyword>
<keyword id="KW-0156">Chromatin regulator</keyword>
<keyword id="KW-0227">DNA damage</keyword>
<keyword id="KW-0234">DNA repair</keyword>
<keyword id="KW-0539">Nucleus</keyword>
<keyword id="KW-1185">Reference proteome</keyword>
<keyword id="KW-0804">Transcription</keyword>
<keyword id="KW-0805">Transcription regulation</keyword>
<accession>Q4P2E8</accession>
<accession>A0A0D1BYL4</accession>
<feature type="chain" id="PRO_0000089101" description="Actin-related protein 4">
    <location>
        <begin position="1"/>
        <end position="534"/>
    </location>
</feature>
<feature type="region of interest" description="Disordered" evidence="2">
    <location>
        <begin position="59"/>
        <end position="116"/>
    </location>
</feature>
<comment type="function">
    <text evidence="1">Chromatin interaction component of the NuA4 histone acetyltransferase complex which is involved in transcriptional activation of selected genes principally by acetylation of nucleosomal histone H4 and H2A. The NuA4 complex is also involved in DNA repair. Is required for NuA4 complex integrity. Component of the SWR1 complex which mediates the ATP-dependent exchange of histone H2A for the H2A variant HZT1 leading to transcriptional regulation of selected genes by chromatin remodeling. Component of the INO80 complex which remodels chromatin by shifting nucleosomes and is involved in DNA repair (By similarity).</text>
</comment>
<comment type="subunit">
    <text evidence="1">Component of the NuA4 histone acetyltransferase complex, of the INO80 chromatin remodeling complex, and of the SWR1 chromatin remodeling complex.</text>
</comment>
<comment type="subcellular location">
    <subcellularLocation>
        <location evidence="1">Nucleus</location>
    </subcellularLocation>
</comment>
<comment type="similarity">
    <text evidence="3">Belongs to the actin family. ARP4 subfamily.</text>
</comment>
<dbReference type="EMBL" id="CM003155">
    <property type="protein sequence ID" value="KIS66932.1"/>
    <property type="molecule type" value="Genomic_DNA"/>
</dbReference>
<dbReference type="RefSeq" id="XP_011391465.1">
    <property type="nucleotide sequence ID" value="XM_011393163.1"/>
</dbReference>
<dbReference type="SMR" id="Q4P2E8"/>
<dbReference type="FunCoup" id="Q4P2E8">
    <property type="interactions" value="163"/>
</dbReference>
<dbReference type="STRING" id="237631.Q4P2E8"/>
<dbReference type="EnsemblFungi" id="KIS66932">
    <property type="protein sequence ID" value="KIS66932"/>
    <property type="gene ID" value="UMAG_05715"/>
</dbReference>
<dbReference type="GeneID" id="23565527"/>
<dbReference type="KEGG" id="uma:UMAG_05715"/>
<dbReference type="VEuPathDB" id="FungiDB:UMAG_05715"/>
<dbReference type="eggNOG" id="KOG0679">
    <property type="taxonomic scope" value="Eukaryota"/>
</dbReference>
<dbReference type="HOGENOM" id="CLU_027965_6_2_1"/>
<dbReference type="InParanoid" id="Q4P2E8"/>
<dbReference type="OMA" id="SKSWHSY"/>
<dbReference type="OrthoDB" id="5132116at2759"/>
<dbReference type="Proteomes" id="UP000000561">
    <property type="component" value="Chromosome 16"/>
</dbReference>
<dbReference type="GO" id="GO:0035267">
    <property type="term" value="C:NuA4 histone acetyltransferase complex"/>
    <property type="evidence" value="ECO:0000318"/>
    <property type="project" value="GO_Central"/>
</dbReference>
<dbReference type="GO" id="GO:0016514">
    <property type="term" value="C:SWI/SNF complex"/>
    <property type="evidence" value="ECO:0000318"/>
    <property type="project" value="GO_Central"/>
</dbReference>
<dbReference type="GO" id="GO:0003682">
    <property type="term" value="F:chromatin binding"/>
    <property type="evidence" value="ECO:0000318"/>
    <property type="project" value="GO_Central"/>
</dbReference>
<dbReference type="GO" id="GO:0006338">
    <property type="term" value="P:chromatin remodeling"/>
    <property type="evidence" value="ECO:0000318"/>
    <property type="project" value="GO_Central"/>
</dbReference>
<dbReference type="GO" id="GO:0006281">
    <property type="term" value="P:DNA repair"/>
    <property type="evidence" value="ECO:0007669"/>
    <property type="project" value="UniProtKB-KW"/>
</dbReference>
<dbReference type="GO" id="GO:0006357">
    <property type="term" value="P:regulation of transcription by RNA polymerase II"/>
    <property type="evidence" value="ECO:0000318"/>
    <property type="project" value="GO_Central"/>
</dbReference>
<dbReference type="CDD" id="cd13395">
    <property type="entry name" value="ASKHA_NBD_Arp4_ACTL6-like"/>
    <property type="match status" value="1"/>
</dbReference>
<dbReference type="FunFam" id="3.30.420.40:FF:000058">
    <property type="entry name" value="Putative actin-related protein 5"/>
    <property type="match status" value="1"/>
</dbReference>
<dbReference type="FunFam" id="3.90.640.10:FF:000133">
    <property type="entry name" value="SWI/SNF and RSC complexes subunit arp42"/>
    <property type="match status" value="1"/>
</dbReference>
<dbReference type="Gene3D" id="3.30.420.40">
    <property type="match status" value="5"/>
</dbReference>
<dbReference type="Gene3D" id="3.90.640.10">
    <property type="entry name" value="Actin, Chain A, domain 4"/>
    <property type="match status" value="1"/>
</dbReference>
<dbReference type="InterPro" id="IPR004000">
    <property type="entry name" value="Actin"/>
</dbReference>
<dbReference type="InterPro" id="IPR004001">
    <property type="entry name" value="Actin_CS"/>
</dbReference>
<dbReference type="InterPro" id="IPR043129">
    <property type="entry name" value="ATPase_NBD"/>
</dbReference>
<dbReference type="PANTHER" id="PTHR11937">
    <property type="entry name" value="ACTIN"/>
    <property type="match status" value="1"/>
</dbReference>
<dbReference type="Pfam" id="PF00022">
    <property type="entry name" value="Actin"/>
    <property type="match status" value="1"/>
</dbReference>
<dbReference type="SMART" id="SM00268">
    <property type="entry name" value="ACTIN"/>
    <property type="match status" value="1"/>
</dbReference>
<dbReference type="SUPFAM" id="SSF53067">
    <property type="entry name" value="Actin-like ATPase domain"/>
    <property type="match status" value="2"/>
</dbReference>
<dbReference type="PROSITE" id="PS00432">
    <property type="entry name" value="ACTINS_2"/>
    <property type="match status" value="1"/>
</dbReference>
<proteinExistence type="inferred from homology"/>
<sequence>MPGVYGGDEINALVIDAGHSSSRVGWAGEDAPRVVLPSYYGHTSITDDAIAELESQAAFATSSSSTVEPTERAEPVDGDETMADGQALSTSNGNGGAAATQEASDHRLRQARAKSASKTLRFSVDREKKRRRFVGDNELNLYRTNLEIAPIFDDDGMLADASAFAQLCSFGLDSLSCDASEHPLLLTEPAWNSRESREKLTELAFETLGSPAFYLANRSVLSSFAAGKPSSLVIDVGSTNVSTIPIVDGFILRKGIYRHNNGGEAINRALLYSLHHGRGATFAGVTPQYVIKSRSSVDPGTPANVVLRQERVQGASSSFRSYHINRVVNDFKESVAQVLEVPWDDQQAQFRSGRMYEFPDGYNDAFGVERLRAAEVLFTPALWNGVSSSESFGAVLHASSQPSSEAGAVNGGSVSAAGATSVAGGKAAIGLADMVLSSINAVDVDSRPSLYGNIVLVGGSSLIQGLSDRLSYELGVKAPNQKIKIHSPGNTTERRHSSWLGASILASLGTFHQLWISKQEYEEHGAAIVHARCK</sequence>
<reference key="1">
    <citation type="journal article" date="2006" name="Nature">
        <title>Insights from the genome of the biotrophic fungal plant pathogen Ustilago maydis.</title>
        <authorList>
            <person name="Kaemper J."/>
            <person name="Kahmann R."/>
            <person name="Boelker M."/>
            <person name="Ma L.-J."/>
            <person name="Brefort T."/>
            <person name="Saville B.J."/>
            <person name="Banuett F."/>
            <person name="Kronstad J.W."/>
            <person name="Gold S.E."/>
            <person name="Mueller O."/>
            <person name="Perlin M.H."/>
            <person name="Woesten H.A.B."/>
            <person name="de Vries R."/>
            <person name="Ruiz-Herrera J."/>
            <person name="Reynaga-Pena C.G."/>
            <person name="Snetselaar K."/>
            <person name="McCann M."/>
            <person name="Perez-Martin J."/>
            <person name="Feldbruegge M."/>
            <person name="Basse C.W."/>
            <person name="Steinberg G."/>
            <person name="Ibeas J.I."/>
            <person name="Holloman W."/>
            <person name="Guzman P."/>
            <person name="Farman M.L."/>
            <person name="Stajich J.E."/>
            <person name="Sentandreu R."/>
            <person name="Gonzalez-Prieto J.M."/>
            <person name="Kennell J.C."/>
            <person name="Molina L."/>
            <person name="Schirawski J."/>
            <person name="Mendoza-Mendoza A."/>
            <person name="Greilinger D."/>
            <person name="Muench K."/>
            <person name="Roessel N."/>
            <person name="Scherer M."/>
            <person name="Vranes M."/>
            <person name="Ladendorf O."/>
            <person name="Vincon V."/>
            <person name="Fuchs U."/>
            <person name="Sandrock B."/>
            <person name="Meng S."/>
            <person name="Ho E.C.H."/>
            <person name="Cahill M.J."/>
            <person name="Boyce K.J."/>
            <person name="Klose J."/>
            <person name="Klosterman S.J."/>
            <person name="Deelstra H.J."/>
            <person name="Ortiz-Castellanos L."/>
            <person name="Li W."/>
            <person name="Sanchez-Alonso P."/>
            <person name="Schreier P.H."/>
            <person name="Haeuser-Hahn I."/>
            <person name="Vaupel M."/>
            <person name="Koopmann E."/>
            <person name="Friedrich G."/>
            <person name="Voss H."/>
            <person name="Schlueter T."/>
            <person name="Margolis J."/>
            <person name="Platt D."/>
            <person name="Swimmer C."/>
            <person name="Gnirke A."/>
            <person name="Chen F."/>
            <person name="Vysotskaia V."/>
            <person name="Mannhaupt G."/>
            <person name="Gueldener U."/>
            <person name="Muensterkoetter M."/>
            <person name="Haase D."/>
            <person name="Oesterheld M."/>
            <person name="Mewes H.-W."/>
            <person name="Mauceli E.W."/>
            <person name="DeCaprio D."/>
            <person name="Wade C.M."/>
            <person name="Butler J."/>
            <person name="Young S.K."/>
            <person name="Jaffe D.B."/>
            <person name="Calvo S.E."/>
            <person name="Nusbaum C."/>
            <person name="Galagan J.E."/>
            <person name="Birren B.W."/>
        </authorList>
    </citation>
    <scope>NUCLEOTIDE SEQUENCE [LARGE SCALE GENOMIC DNA]</scope>
    <source>
        <strain>DSM 14603 / FGSC 9021 / UM521</strain>
    </source>
</reference>
<reference key="2">
    <citation type="submission" date="2014-09" db="EMBL/GenBank/DDBJ databases">
        <authorList>
            <person name="Gueldener U."/>
            <person name="Muensterkoetter M."/>
            <person name="Walter M.C."/>
            <person name="Mannhaupt G."/>
            <person name="Kahmann R."/>
        </authorList>
    </citation>
    <scope>GENOME REANNOTATION</scope>
    <source>
        <strain>DSM 14603 / FGSC 9021 / UM521</strain>
    </source>
</reference>
<evidence type="ECO:0000250" key="1"/>
<evidence type="ECO:0000256" key="2">
    <source>
        <dbReference type="SAM" id="MobiDB-lite"/>
    </source>
</evidence>
<evidence type="ECO:0000305" key="3"/>
<gene>
    <name type="primary">ARP4</name>
    <name type="ORF">UMAG_05715</name>
</gene>
<organism>
    <name type="scientific">Mycosarcoma maydis</name>
    <name type="common">Corn smut fungus</name>
    <name type="synonym">Ustilago maydis</name>
    <dbReference type="NCBI Taxonomy" id="5270"/>
    <lineage>
        <taxon>Eukaryota</taxon>
        <taxon>Fungi</taxon>
        <taxon>Dikarya</taxon>
        <taxon>Basidiomycota</taxon>
        <taxon>Ustilaginomycotina</taxon>
        <taxon>Ustilaginomycetes</taxon>
        <taxon>Ustilaginales</taxon>
        <taxon>Ustilaginaceae</taxon>
        <taxon>Mycosarcoma</taxon>
    </lineage>
</organism>